<sequence>MAKTYDYLFKLLLIGDSGVGKTCLLFRFSEDAFNTTFISTIGIDFKIRTIELDGKKIKLQIWDTAGQERFRTITTAYYRGAMGIMLVYDITNEKSFDNIKNWIRNIEEHASSDVERMILGNKCDMNDKRQVSKERGEKLAIDYGIKFLETSAKSSTNVEEAFFTLARDIMTKLNRKMNDSNSSGAGGPVKITESRSKKTSFFRCSLL</sequence>
<keyword id="KW-1003">Cell membrane</keyword>
<keyword id="KW-0968">Cytoplasmic vesicle</keyword>
<keyword id="KW-0967">Endosome</keyword>
<keyword id="KW-0342">GTP-binding</keyword>
<keyword id="KW-0378">Hydrolase</keyword>
<keyword id="KW-0449">Lipoprotein</keyword>
<keyword id="KW-0460">Magnesium</keyword>
<keyword id="KW-0472">Membrane</keyword>
<keyword id="KW-0479">Metal-binding</keyword>
<keyword id="KW-0488">Methylation</keyword>
<keyword id="KW-0547">Nucleotide-binding</keyword>
<keyword id="KW-0597">Phosphoprotein</keyword>
<keyword id="KW-0636">Prenylation</keyword>
<keyword id="KW-0653">Protein transport</keyword>
<keyword id="KW-1185">Reference proteome</keyword>
<keyword id="KW-0813">Transport</keyword>
<comment type="function">
    <text evidence="2 4 5">The small GTPases Rab are key regulators of intracellular membrane trafficking, from the formation of transport vesicles to their fusion with membranes. Rabs cycle between an inactive GDP-bound form and an active GTP-bound form that is able to recruit to membranes different sets of downstream effectors directly responsible for vesicle formation, movement, tethering and fusion (By similarity). RAB8B may be involved in polarized vesicular trafficking and neurotransmitter release (By similarity). May participate in cell junction dynamics in Sertoli cells (By similarity). May also participate in the export of a subset of neosynthesized proteins through a Rab8-Rab10-Rab11-dependent endososomal export route (By similarity).</text>
</comment>
<comment type="catalytic activity">
    <reaction evidence="2">
        <text>GTP + H2O = GDP + phosphate + H(+)</text>
        <dbReference type="Rhea" id="RHEA:19669"/>
        <dbReference type="ChEBI" id="CHEBI:15377"/>
        <dbReference type="ChEBI" id="CHEBI:15378"/>
        <dbReference type="ChEBI" id="CHEBI:37565"/>
        <dbReference type="ChEBI" id="CHEBI:43474"/>
        <dbReference type="ChEBI" id="CHEBI:58189"/>
        <dbReference type="EC" id="3.6.5.2"/>
    </reaction>
    <physiologicalReaction direction="left-to-right" evidence="2">
        <dbReference type="Rhea" id="RHEA:19670"/>
    </physiologicalReaction>
</comment>
<comment type="cofactor">
    <cofactor evidence="2">
        <name>Mg(2+)</name>
        <dbReference type="ChEBI" id="CHEBI:18420"/>
    </cofactor>
</comment>
<comment type="activity regulation">
    <text evidence="5">Regulated by guanine nucleotide exchange factors (GEFs) including RAB3IP/RABIN8 which promotes the exchange of bound GDP for free GTP. Regulated by GTPase activating proteins (GAPs) which increase the GTP hydrolysis activity. Inhibited by GDP dissociation inhibitors (GDIs).</text>
</comment>
<comment type="subunit">
    <text evidence="4 5 7 8">Associated with actin, delta-catenin and alpha and beta tubulins (By similarity). Interacts with OTOF (PubMed:18772196). Interacts with PEX5R (By similarity). Interacts with RAB3IP (By similarity). Interacts with VIM (By similarity). Interacts with CDH1 (By similarity). Interacts with MICALL2 (PubMed:18094055). Interacts with GDI1, GDI2, CHML and CHM; phosphorylation at Thr-72 disrupts these interactions (By similarity). Interacts with MICAL1 (By similarity).</text>
</comment>
<comment type="subcellular location">
    <subcellularLocation>
        <location evidence="10">Cell membrane</location>
        <topology evidence="10">Lipid-anchor</topology>
        <orientation evidence="10">Cytoplasmic side</orientation>
    </subcellularLocation>
    <subcellularLocation>
        <location evidence="1">Cytoplasmic vesicle</location>
        <location evidence="1">Phagosome membrane</location>
        <topology evidence="1">Lipid-anchor</topology>
        <orientation evidence="1">Cytoplasmic side</orientation>
    </subcellularLocation>
    <subcellularLocation>
        <location evidence="5">Endosome membrane</location>
    </subcellularLocation>
    <text evidence="1">Recruited to phagosomes containing S.aureus or Mycobacterium.</text>
</comment>
<comment type="domain">
    <text evidence="3">Switch 1, switch 2 and the interswitch regions are characteristic of Rab GTPases and mediate the interactions with Rab downstream effectors. The switch regions undergo conformational changes upon nucleotide binding which drives interaction with specific sets of effector proteins, with most effectors only binding to GTP-bound Rab.</text>
</comment>
<comment type="PTM">
    <text evidence="5">Phosphorylation of Thr-72 in the switch II region by LRRK2 prevents the association of RAB regulatory proteins, including CHM, CHML and RAB GDP dissociation inhibitors GDI1 and GDI2.</text>
</comment>
<comment type="similarity">
    <text evidence="10">Belongs to the small GTPase superfamily. Rab family.</text>
</comment>
<proteinExistence type="evidence at protein level"/>
<organism>
    <name type="scientific">Mus musculus</name>
    <name type="common">Mouse</name>
    <dbReference type="NCBI Taxonomy" id="10090"/>
    <lineage>
        <taxon>Eukaryota</taxon>
        <taxon>Metazoa</taxon>
        <taxon>Chordata</taxon>
        <taxon>Craniata</taxon>
        <taxon>Vertebrata</taxon>
        <taxon>Euteleostomi</taxon>
        <taxon>Mammalia</taxon>
        <taxon>Eutheria</taxon>
        <taxon>Euarchontoglires</taxon>
        <taxon>Glires</taxon>
        <taxon>Rodentia</taxon>
        <taxon>Myomorpha</taxon>
        <taxon>Muroidea</taxon>
        <taxon>Muridae</taxon>
        <taxon>Murinae</taxon>
        <taxon>Mus</taxon>
        <taxon>Mus</taxon>
    </lineage>
</organism>
<feature type="chain" id="PRO_0000121135" description="Ras-related protein Rab-8B">
    <location>
        <begin position="1"/>
        <end position="204"/>
    </location>
</feature>
<feature type="propeptide" id="PRO_0000370801" description="Removed in mature form" evidence="6">
    <location>
        <begin position="205"/>
        <end position="207"/>
    </location>
</feature>
<feature type="short sequence motif" description="Switch 1" evidence="3">
    <location>
        <begin position="31"/>
        <end position="45"/>
    </location>
</feature>
<feature type="short sequence motif" description="Switch 2" evidence="3">
    <location>
        <begin position="63"/>
        <end position="80"/>
    </location>
</feature>
<feature type="binding site" evidence="2">
    <location>
        <position position="17"/>
    </location>
    <ligand>
        <name>GTP</name>
        <dbReference type="ChEBI" id="CHEBI:37565"/>
    </ligand>
</feature>
<feature type="binding site" evidence="2">
    <location>
        <position position="18"/>
    </location>
    <ligand>
        <name>GTP</name>
        <dbReference type="ChEBI" id="CHEBI:37565"/>
    </ligand>
</feature>
<feature type="binding site" evidence="2">
    <location>
        <position position="19"/>
    </location>
    <ligand>
        <name>GTP</name>
        <dbReference type="ChEBI" id="CHEBI:37565"/>
    </ligand>
</feature>
<feature type="binding site" evidence="2">
    <location>
        <position position="20"/>
    </location>
    <ligand>
        <name>GTP</name>
        <dbReference type="ChEBI" id="CHEBI:37565"/>
    </ligand>
</feature>
<feature type="binding site" evidence="2">
    <location>
        <position position="21"/>
    </location>
    <ligand>
        <name>GTP</name>
        <dbReference type="ChEBI" id="CHEBI:37565"/>
    </ligand>
</feature>
<feature type="binding site" evidence="2">
    <location>
        <position position="22"/>
    </location>
    <ligand>
        <name>GTP</name>
        <dbReference type="ChEBI" id="CHEBI:37565"/>
    </ligand>
</feature>
<feature type="binding site" evidence="2">
    <location>
        <position position="22"/>
    </location>
    <ligand>
        <name>Mg(2+)</name>
        <dbReference type="ChEBI" id="CHEBI:18420"/>
    </ligand>
</feature>
<feature type="binding site" evidence="2">
    <location>
        <position position="23"/>
    </location>
    <ligand>
        <name>GTP</name>
        <dbReference type="ChEBI" id="CHEBI:37565"/>
    </ligand>
</feature>
<feature type="binding site" evidence="2">
    <location>
        <position position="35"/>
    </location>
    <ligand>
        <name>GTP</name>
        <dbReference type="ChEBI" id="CHEBI:37565"/>
    </ligand>
</feature>
<feature type="binding site" evidence="2">
    <location>
        <position position="39"/>
    </location>
    <ligand>
        <name>GTP</name>
        <dbReference type="ChEBI" id="CHEBI:37565"/>
    </ligand>
</feature>
<feature type="binding site" evidence="2">
    <location>
        <position position="40"/>
    </location>
    <ligand>
        <name>GTP</name>
        <dbReference type="ChEBI" id="CHEBI:37565"/>
    </ligand>
</feature>
<feature type="binding site" evidence="2">
    <location>
        <position position="40"/>
    </location>
    <ligand>
        <name>Mg(2+)</name>
        <dbReference type="ChEBI" id="CHEBI:18420"/>
    </ligand>
</feature>
<feature type="binding site" evidence="2">
    <location>
        <position position="63"/>
    </location>
    <ligand>
        <name>Mg(2+)</name>
        <dbReference type="ChEBI" id="CHEBI:18420"/>
    </ligand>
</feature>
<feature type="binding site" evidence="2">
    <location>
        <position position="66"/>
    </location>
    <ligand>
        <name>GTP</name>
        <dbReference type="ChEBI" id="CHEBI:37565"/>
    </ligand>
</feature>
<feature type="binding site" evidence="2">
    <location>
        <position position="121"/>
    </location>
    <ligand>
        <name>GTP</name>
        <dbReference type="ChEBI" id="CHEBI:37565"/>
    </ligand>
</feature>
<feature type="binding site" evidence="2">
    <location>
        <position position="122"/>
    </location>
    <ligand>
        <name>GTP</name>
        <dbReference type="ChEBI" id="CHEBI:37565"/>
    </ligand>
</feature>
<feature type="binding site" evidence="2">
    <location>
        <position position="124"/>
    </location>
    <ligand>
        <name>GTP</name>
        <dbReference type="ChEBI" id="CHEBI:37565"/>
    </ligand>
</feature>
<feature type="binding site" evidence="2">
    <location>
        <position position="152"/>
    </location>
    <ligand>
        <name>GTP</name>
        <dbReference type="ChEBI" id="CHEBI:37565"/>
    </ligand>
</feature>
<feature type="binding site" evidence="2">
    <location>
        <position position="153"/>
    </location>
    <ligand>
        <name>GTP</name>
        <dbReference type="ChEBI" id="CHEBI:37565"/>
    </ligand>
</feature>
<feature type="modified residue" description="Phosphothreonine; by LRRK2" evidence="9">
    <location>
        <position position="72"/>
    </location>
</feature>
<feature type="modified residue" description="Phosphoserine" evidence="12">
    <location>
        <position position="180"/>
    </location>
</feature>
<feature type="modified residue" description="Phosphoserine" evidence="12">
    <location>
        <position position="183"/>
    </location>
</feature>
<feature type="modified residue" description="Cysteine methyl ester" evidence="6">
    <location>
        <position position="204"/>
    </location>
</feature>
<feature type="lipid moiety-binding region" description="S-geranylgeranyl cysteine" evidence="1">
    <location>
        <position position="204"/>
    </location>
</feature>
<reference key="1">
    <citation type="journal article" date="2005" name="Science">
        <title>The transcriptional landscape of the mammalian genome.</title>
        <authorList>
            <person name="Carninci P."/>
            <person name="Kasukawa T."/>
            <person name="Katayama S."/>
            <person name="Gough J."/>
            <person name="Frith M.C."/>
            <person name="Maeda N."/>
            <person name="Oyama R."/>
            <person name="Ravasi T."/>
            <person name="Lenhard B."/>
            <person name="Wells C."/>
            <person name="Kodzius R."/>
            <person name="Shimokawa K."/>
            <person name="Bajic V.B."/>
            <person name="Brenner S.E."/>
            <person name="Batalov S."/>
            <person name="Forrest A.R."/>
            <person name="Zavolan M."/>
            <person name="Davis M.J."/>
            <person name="Wilming L.G."/>
            <person name="Aidinis V."/>
            <person name="Allen J.E."/>
            <person name="Ambesi-Impiombato A."/>
            <person name="Apweiler R."/>
            <person name="Aturaliya R.N."/>
            <person name="Bailey T.L."/>
            <person name="Bansal M."/>
            <person name="Baxter L."/>
            <person name="Beisel K.W."/>
            <person name="Bersano T."/>
            <person name="Bono H."/>
            <person name="Chalk A.M."/>
            <person name="Chiu K.P."/>
            <person name="Choudhary V."/>
            <person name="Christoffels A."/>
            <person name="Clutterbuck D.R."/>
            <person name="Crowe M.L."/>
            <person name="Dalla E."/>
            <person name="Dalrymple B.P."/>
            <person name="de Bono B."/>
            <person name="Della Gatta G."/>
            <person name="di Bernardo D."/>
            <person name="Down T."/>
            <person name="Engstrom P."/>
            <person name="Fagiolini M."/>
            <person name="Faulkner G."/>
            <person name="Fletcher C.F."/>
            <person name="Fukushima T."/>
            <person name="Furuno M."/>
            <person name="Futaki S."/>
            <person name="Gariboldi M."/>
            <person name="Georgii-Hemming P."/>
            <person name="Gingeras T.R."/>
            <person name="Gojobori T."/>
            <person name="Green R.E."/>
            <person name="Gustincich S."/>
            <person name="Harbers M."/>
            <person name="Hayashi Y."/>
            <person name="Hensch T.K."/>
            <person name="Hirokawa N."/>
            <person name="Hill D."/>
            <person name="Huminiecki L."/>
            <person name="Iacono M."/>
            <person name="Ikeo K."/>
            <person name="Iwama A."/>
            <person name="Ishikawa T."/>
            <person name="Jakt M."/>
            <person name="Kanapin A."/>
            <person name="Katoh M."/>
            <person name="Kawasawa Y."/>
            <person name="Kelso J."/>
            <person name="Kitamura H."/>
            <person name="Kitano H."/>
            <person name="Kollias G."/>
            <person name="Krishnan S.P."/>
            <person name="Kruger A."/>
            <person name="Kummerfeld S.K."/>
            <person name="Kurochkin I.V."/>
            <person name="Lareau L.F."/>
            <person name="Lazarevic D."/>
            <person name="Lipovich L."/>
            <person name="Liu J."/>
            <person name="Liuni S."/>
            <person name="McWilliam S."/>
            <person name="Madan Babu M."/>
            <person name="Madera M."/>
            <person name="Marchionni L."/>
            <person name="Matsuda H."/>
            <person name="Matsuzawa S."/>
            <person name="Miki H."/>
            <person name="Mignone F."/>
            <person name="Miyake S."/>
            <person name="Morris K."/>
            <person name="Mottagui-Tabar S."/>
            <person name="Mulder N."/>
            <person name="Nakano N."/>
            <person name="Nakauchi H."/>
            <person name="Ng P."/>
            <person name="Nilsson R."/>
            <person name="Nishiguchi S."/>
            <person name="Nishikawa S."/>
            <person name="Nori F."/>
            <person name="Ohara O."/>
            <person name="Okazaki Y."/>
            <person name="Orlando V."/>
            <person name="Pang K.C."/>
            <person name="Pavan W.J."/>
            <person name="Pavesi G."/>
            <person name="Pesole G."/>
            <person name="Petrovsky N."/>
            <person name="Piazza S."/>
            <person name="Reed J."/>
            <person name="Reid J.F."/>
            <person name="Ring B.Z."/>
            <person name="Ringwald M."/>
            <person name="Rost B."/>
            <person name="Ruan Y."/>
            <person name="Salzberg S.L."/>
            <person name="Sandelin A."/>
            <person name="Schneider C."/>
            <person name="Schoenbach C."/>
            <person name="Sekiguchi K."/>
            <person name="Semple C.A."/>
            <person name="Seno S."/>
            <person name="Sessa L."/>
            <person name="Sheng Y."/>
            <person name="Shibata Y."/>
            <person name="Shimada H."/>
            <person name="Shimada K."/>
            <person name="Silva D."/>
            <person name="Sinclair B."/>
            <person name="Sperling S."/>
            <person name="Stupka E."/>
            <person name="Sugiura K."/>
            <person name="Sultana R."/>
            <person name="Takenaka Y."/>
            <person name="Taki K."/>
            <person name="Tammoja K."/>
            <person name="Tan S.L."/>
            <person name="Tang S."/>
            <person name="Taylor M.S."/>
            <person name="Tegner J."/>
            <person name="Teichmann S.A."/>
            <person name="Ueda H.R."/>
            <person name="van Nimwegen E."/>
            <person name="Verardo R."/>
            <person name="Wei C.L."/>
            <person name="Yagi K."/>
            <person name="Yamanishi H."/>
            <person name="Zabarovsky E."/>
            <person name="Zhu S."/>
            <person name="Zimmer A."/>
            <person name="Hide W."/>
            <person name="Bult C."/>
            <person name="Grimmond S.M."/>
            <person name="Teasdale R.D."/>
            <person name="Liu E.T."/>
            <person name="Brusic V."/>
            <person name="Quackenbush J."/>
            <person name="Wahlestedt C."/>
            <person name="Mattick J.S."/>
            <person name="Hume D.A."/>
            <person name="Kai C."/>
            <person name="Sasaki D."/>
            <person name="Tomaru Y."/>
            <person name="Fukuda S."/>
            <person name="Kanamori-Katayama M."/>
            <person name="Suzuki M."/>
            <person name="Aoki J."/>
            <person name="Arakawa T."/>
            <person name="Iida J."/>
            <person name="Imamura K."/>
            <person name="Itoh M."/>
            <person name="Kato T."/>
            <person name="Kawaji H."/>
            <person name="Kawagashira N."/>
            <person name="Kawashima T."/>
            <person name="Kojima M."/>
            <person name="Kondo S."/>
            <person name="Konno H."/>
            <person name="Nakano K."/>
            <person name="Ninomiya N."/>
            <person name="Nishio T."/>
            <person name="Okada M."/>
            <person name="Plessy C."/>
            <person name="Shibata K."/>
            <person name="Shiraki T."/>
            <person name="Suzuki S."/>
            <person name="Tagami M."/>
            <person name="Waki K."/>
            <person name="Watahiki A."/>
            <person name="Okamura-Oho Y."/>
            <person name="Suzuki H."/>
            <person name="Kawai J."/>
            <person name="Hayashizaki Y."/>
        </authorList>
    </citation>
    <scope>NUCLEOTIDE SEQUENCE [LARGE SCALE MRNA]</scope>
    <source>
        <strain>C57BL/6J</strain>
        <tissue>Heart</tissue>
    </source>
</reference>
<reference key="2">
    <citation type="journal article" date="2004" name="Genome Res.">
        <title>The status, quality, and expansion of the NIH full-length cDNA project: the Mammalian Gene Collection (MGC).</title>
        <authorList>
            <consortium name="The MGC Project Team"/>
        </authorList>
    </citation>
    <scope>NUCLEOTIDE SEQUENCE [LARGE SCALE MRNA]</scope>
    <source>
        <strain>C57BL/6J</strain>
        <tissue>Brain</tissue>
    </source>
</reference>
<reference key="3">
    <citation type="journal article" date="2008" name="Hum. Mol. Genet.">
        <title>Rab8b GTPase, a protein transport regulator, is an interacting partner of otoferlin, defective in a human autosomal recessive deafness form.</title>
        <authorList>
            <person name="Heidrych P."/>
            <person name="Zimmermann U."/>
            <person name="Bress A."/>
            <person name="Pusch C.M."/>
            <person name="Ruth P."/>
            <person name="Pfister M."/>
            <person name="Knipper M."/>
            <person name="Blin N."/>
        </authorList>
    </citation>
    <scope>INTERACTION WITH OTOF</scope>
</reference>
<reference key="4">
    <citation type="journal article" date="2008" name="Mol. Biol. Cell">
        <title>The interaction of JRAB/MICAL-L2 with Rab8 and Rab13 coordinates the assembly of tight junctions and adherens junctions.</title>
        <authorList>
            <person name="Yamamura R."/>
            <person name="Nishimura N."/>
            <person name="Nakatsuji H."/>
            <person name="Arase S."/>
            <person name="Sasaki T."/>
        </authorList>
    </citation>
    <scope>INTERACTION WITH MICALL2</scope>
</reference>
<reference key="5">
    <citation type="journal article" date="2009" name="Immunity">
        <title>The phagosomal proteome in interferon-gamma-activated macrophages.</title>
        <authorList>
            <person name="Trost M."/>
            <person name="English L."/>
            <person name="Lemieux S."/>
            <person name="Courcelles M."/>
            <person name="Desjardins M."/>
            <person name="Thibault P."/>
        </authorList>
    </citation>
    <scope>PHOSPHORYLATION [LARGE SCALE ANALYSIS] AT SER-180 AND SER-183</scope>
    <scope>IDENTIFICATION BY MASS SPECTROMETRY [LARGE SCALE ANALYSIS]</scope>
</reference>
<reference key="6">
    <citation type="journal article" date="2010" name="Cell">
        <title>A tissue-specific atlas of mouse protein phosphorylation and expression.</title>
        <authorList>
            <person name="Huttlin E.L."/>
            <person name="Jedrychowski M.P."/>
            <person name="Elias J.E."/>
            <person name="Goswami T."/>
            <person name="Rad R."/>
            <person name="Beausoleil S.A."/>
            <person name="Villen J."/>
            <person name="Haas W."/>
            <person name="Sowa M.E."/>
            <person name="Gygi S.P."/>
        </authorList>
    </citation>
    <scope>IDENTIFICATION BY MASS SPECTROMETRY [LARGE SCALE ANALYSIS]</scope>
    <source>
        <tissue>Brain</tissue>
        <tissue>Brown adipose tissue</tissue>
        <tissue>Heart</tissue>
        <tissue>Kidney</tissue>
        <tissue>Lung</tissue>
        <tissue>Spleen</tissue>
        <tissue>Testis</tissue>
    </source>
</reference>
<reference key="7">
    <citation type="journal article" date="2017" name="Elife">
        <title>Systematic proteomic analysis of LRRK2-mediated Rab GTPase phosphorylation establishes a connection to ciliogenesis.</title>
        <authorList>
            <person name="Steger M."/>
            <person name="Diez F."/>
            <person name="Dhekne H.S."/>
            <person name="Lis P."/>
            <person name="Nirujogi R.S."/>
            <person name="Karayel O."/>
            <person name="Tonelli F."/>
            <person name="Martinez T.N."/>
            <person name="Lorentzen E."/>
            <person name="Pfeffer S.R."/>
            <person name="Alessi D.R."/>
            <person name="Mann M."/>
        </authorList>
    </citation>
    <scope>PHOSPHORYLATION AT THR-72</scope>
</reference>
<protein>
    <recommendedName>
        <fullName>Ras-related protein Rab-8B</fullName>
        <ecNumber evidence="2">3.6.5.2</ecNumber>
    </recommendedName>
</protein>
<evidence type="ECO:0000250" key="1"/>
<evidence type="ECO:0000250" key="2">
    <source>
        <dbReference type="UniProtKB" id="P61006"/>
    </source>
</evidence>
<evidence type="ECO:0000250" key="3">
    <source>
        <dbReference type="UniProtKB" id="P62820"/>
    </source>
</evidence>
<evidence type="ECO:0000250" key="4">
    <source>
        <dbReference type="UniProtKB" id="P70550"/>
    </source>
</evidence>
<evidence type="ECO:0000250" key="5">
    <source>
        <dbReference type="UniProtKB" id="Q92930"/>
    </source>
</evidence>
<evidence type="ECO:0000255" key="6"/>
<evidence type="ECO:0000269" key="7">
    <source>
    </source>
</evidence>
<evidence type="ECO:0000269" key="8">
    <source>
    </source>
</evidence>
<evidence type="ECO:0000269" key="9">
    <source>
    </source>
</evidence>
<evidence type="ECO:0000305" key="10"/>
<evidence type="ECO:0000312" key="11">
    <source>
        <dbReference type="MGI" id="MGI:2442982"/>
    </source>
</evidence>
<evidence type="ECO:0007744" key="12">
    <source>
    </source>
</evidence>
<gene>
    <name evidence="11" type="primary">Rab8b</name>
</gene>
<dbReference type="EC" id="3.6.5.2" evidence="2"/>
<dbReference type="EMBL" id="AK084650">
    <property type="protein sequence ID" value="BAC39239.1"/>
    <property type="molecule type" value="mRNA"/>
</dbReference>
<dbReference type="EMBL" id="AK155621">
    <property type="protein sequence ID" value="BAE33350.1"/>
    <property type="molecule type" value="mRNA"/>
</dbReference>
<dbReference type="EMBL" id="BC059208">
    <property type="protein sequence ID" value="AAH59208.1"/>
    <property type="molecule type" value="mRNA"/>
</dbReference>
<dbReference type="CCDS" id="CCDS23309.1"/>
<dbReference type="RefSeq" id="NP_775589.1">
    <property type="nucleotide sequence ID" value="NM_173413.3"/>
</dbReference>
<dbReference type="SMR" id="P61028"/>
<dbReference type="BioGRID" id="231663">
    <property type="interactions" value="15"/>
</dbReference>
<dbReference type="FunCoup" id="P61028">
    <property type="interactions" value="3575"/>
</dbReference>
<dbReference type="IntAct" id="P61028">
    <property type="interactions" value="9"/>
</dbReference>
<dbReference type="STRING" id="10090.ENSMUSP00000041857"/>
<dbReference type="GlyGen" id="P61028">
    <property type="glycosylation" value="2 sites, 1 N-linked glycan (1 site), 1 O-linked glycan (1 site)"/>
</dbReference>
<dbReference type="iPTMnet" id="P61028"/>
<dbReference type="PhosphoSitePlus" id="P61028"/>
<dbReference type="SwissPalm" id="P61028"/>
<dbReference type="jPOST" id="P61028"/>
<dbReference type="PaxDb" id="10090-ENSMUSP00000041857"/>
<dbReference type="PeptideAtlas" id="P61028"/>
<dbReference type="ProteomicsDB" id="253155"/>
<dbReference type="Pumba" id="P61028"/>
<dbReference type="Antibodypedia" id="25649">
    <property type="antibodies" value="253 antibodies from 31 providers"/>
</dbReference>
<dbReference type="DNASU" id="235442"/>
<dbReference type="Ensembl" id="ENSMUST00000041139.9">
    <property type="protein sequence ID" value="ENSMUSP00000041857.8"/>
    <property type="gene ID" value="ENSMUSG00000036943.10"/>
</dbReference>
<dbReference type="GeneID" id="235442"/>
<dbReference type="KEGG" id="mmu:235442"/>
<dbReference type="UCSC" id="uc009qfk.2">
    <property type="organism name" value="mouse"/>
</dbReference>
<dbReference type="AGR" id="MGI:2442982"/>
<dbReference type="CTD" id="51762"/>
<dbReference type="MGI" id="MGI:2442982">
    <property type="gene designation" value="Rab8b"/>
</dbReference>
<dbReference type="VEuPathDB" id="HostDB:ENSMUSG00000036943"/>
<dbReference type="eggNOG" id="KOG0078">
    <property type="taxonomic scope" value="Eukaryota"/>
</dbReference>
<dbReference type="GeneTree" id="ENSGT00940000155363"/>
<dbReference type="HOGENOM" id="CLU_041217_23_1_1"/>
<dbReference type="InParanoid" id="P61028"/>
<dbReference type="OMA" id="FDWLIKI"/>
<dbReference type="OrthoDB" id="9989112at2759"/>
<dbReference type="PhylomeDB" id="P61028"/>
<dbReference type="TreeFam" id="TF314097"/>
<dbReference type="Reactome" id="R-MMU-8854214">
    <property type="pathway name" value="TBC/RABGAPs"/>
</dbReference>
<dbReference type="Reactome" id="R-MMU-8873719">
    <property type="pathway name" value="RAB geranylgeranylation"/>
</dbReference>
<dbReference type="Reactome" id="R-MMU-8876198">
    <property type="pathway name" value="RAB GEFs exchange GTP for GDP on RABs"/>
</dbReference>
<dbReference type="BioGRID-ORCS" id="235442">
    <property type="hits" value="5 hits in 78 CRISPR screens"/>
</dbReference>
<dbReference type="CD-CODE" id="CE726F99">
    <property type="entry name" value="Postsynaptic density"/>
</dbReference>
<dbReference type="ChiTaRS" id="Rab8b">
    <property type="organism name" value="mouse"/>
</dbReference>
<dbReference type="PRO" id="PR:P61028"/>
<dbReference type="Proteomes" id="UP000000589">
    <property type="component" value="Chromosome 9"/>
</dbReference>
<dbReference type="RNAct" id="P61028">
    <property type="molecule type" value="protein"/>
</dbReference>
<dbReference type="Bgee" id="ENSMUSG00000036943">
    <property type="expression patterns" value="Expressed in stroma of bone marrow and 238 other cell types or tissues"/>
</dbReference>
<dbReference type="ExpressionAtlas" id="P61028">
    <property type="expression patterns" value="baseline and differential"/>
</dbReference>
<dbReference type="GO" id="GO:0010008">
    <property type="term" value="C:endosome membrane"/>
    <property type="evidence" value="ECO:0000250"/>
    <property type="project" value="UniProtKB"/>
</dbReference>
<dbReference type="GO" id="GO:0005739">
    <property type="term" value="C:mitochondrion"/>
    <property type="evidence" value="ECO:0007005"/>
    <property type="project" value="MGI"/>
</dbReference>
<dbReference type="GO" id="GO:0005778">
    <property type="term" value="C:peroxisomal membrane"/>
    <property type="evidence" value="ECO:0007669"/>
    <property type="project" value="Ensembl"/>
</dbReference>
<dbReference type="GO" id="GO:0045335">
    <property type="term" value="C:phagocytic vesicle"/>
    <property type="evidence" value="ECO:0000250"/>
    <property type="project" value="UniProtKB"/>
</dbReference>
<dbReference type="GO" id="GO:0030670">
    <property type="term" value="C:phagocytic vesicle membrane"/>
    <property type="evidence" value="ECO:0007669"/>
    <property type="project" value="UniProtKB-SubCell"/>
</dbReference>
<dbReference type="GO" id="GO:0005886">
    <property type="term" value="C:plasma membrane"/>
    <property type="evidence" value="ECO:0007669"/>
    <property type="project" value="UniProtKB-SubCell"/>
</dbReference>
<dbReference type="GO" id="GO:0019003">
    <property type="term" value="F:GDP binding"/>
    <property type="evidence" value="ECO:0000250"/>
    <property type="project" value="UniProtKB"/>
</dbReference>
<dbReference type="GO" id="GO:0005525">
    <property type="term" value="F:GTP binding"/>
    <property type="evidence" value="ECO:0007669"/>
    <property type="project" value="UniProtKB-KW"/>
</dbReference>
<dbReference type="GO" id="GO:0003924">
    <property type="term" value="F:GTPase activity"/>
    <property type="evidence" value="ECO:0007669"/>
    <property type="project" value="InterPro"/>
</dbReference>
<dbReference type="GO" id="GO:0005102">
    <property type="term" value="F:signaling receptor binding"/>
    <property type="evidence" value="ECO:0007669"/>
    <property type="project" value="Ensembl"/>
</dbReference>
<dbReference type="GO" id="GO:0019882">
    <property type="term" value="P:antigen processing and presentation"/>
    <property type="evidence" value="ECO:0007669"/>
    <property type="project" value="Ensembl"/>
</dbReference>
<dbReference type="GO" id="GO:0150115">
    <property type="term" value="P:cell-substrate junction organization"/>
    <property type="evidence" value="ECO:0000250"/>
    <property type="project" value="UniProtKB"/>
</dbReference>
<dbReference type="GO" id="GO:0045046">
    <property type="term" value="P:protein import into peroxisome membrane"/>
    <property type="evidence" value="ECO:0007669"/>
    <property type="project" value="Ensembl"/>
</dbReference>
<dbReference type="CDD" id="cd01867">
    <property type="entry name" value="Rab8_Rab10_Rab13_like"/>
    <property type="match status" value="1"/>
</dbReference>
<dbReference type="FunFam" id="3.40.50.300:FF:000202">
    <property type="entry name" value="ras-related protein Rab-8A"/>
    <property type="match status" value="1"/>
</dbReference>
<dbReference type="Gene3D" id="3.40.50.300">
    <property type="entry name" value="P-loop containing nucleotide triphosphate hydrolases"/>
    <property type="match status" value="1"/>
</dbReference>
<dbReference type="InterPro" id="IPR027417">
    <property type="entry name" value="P-loop_NTPase"/>
</dbReference>
<dbReference type="InterPro" id="IPR005225">
    <property type="entry name" value="Small_GTP-bd"/>
</dbReference>
<dbReference type="InterPro" id="IPR001806">
    <property type="entry name" value="Small_GTPase"/>
</dbReference>
<dbReference type="InterPro" id="IPR050305">
    <property type="entry name" value="Small_GTPase_Rab"/>
</dbReference>
<dbReference type="NCBIfam" id="TIGR00231">
    <property type="entry name" value="small_GTP"/>
    <property type="match status" value="1"/>
</dbReference>
<dbReference type="PANTHER" id="PTHR47980">
    <property type="entry name" value="LD44762P"/>
    <property type="match status" value="1"/>
</dbReference>
<dbReference type="Pfam" id="PF00071">
    <property type="entry name" value="Ras"/>
    <property type="match status" value="1"/>
</dbReference>
<dbReference type="PRINTS" id="PR00449">
    <property type="entry name" value="RASTRNSFRMNG"/>
</dbReference>
<dbReference type="SMART" id="SM00177">
    <property type="entry name" value="ARF"/>
    <property type="match status" value="1"/>
</dbReference>
<dbReference type="SMART" id="SM00175">
    <property type="entry name" value="RAB"/>
    <property type="match status" value="1"/>
</dbReference>
<dbReference type="SMART" id="SM00176">
    <property type="entry name" value="RAN"/>
    <property type="match status" value="1"/>
</dbReference>
<dbReference type="SMART" id="SM00173">
    <property type="entry name" value="RAS"/>
    <property type="match status" value="1"/>
</dbReference>
<dbReference type="SMART" id="SM00174">
    <property type="entry name" value="RHO"/>
    <property type="match status" value="1"/>
</dbReference>
<dbReference type="SUPFAM" id="SSF52540">
    <property type="entry name" value="P-loop containing nucleoside triphosphate hydrolases"/>
    <property type="match status" value="1"/>
</dbReference>
<dbReference type="PROSITE" id="PS51419">
    <property type="entry name" value="RAB"/>
    <property type="match status" value="1"/>
</dbReference>
<name>RAB8B_MOUSE</name>
<accession>P61028</accession>
<accession>Q3U1Z3</accession>